<keyword id="KW-0175">Coiled coil</keyword>
<keyword id="KW-1185">Reference proteome</keyword>
<dbReference type="EMBL" id="U00096">
    <property type="protein sequence ID" value="AAC74442.1"/>
    <property type="molecule type" value="Genomic_DNA"/>
</dbReference>
<dbReference type="EMBL" id="AP009048">
    <property type="protein sequence ID" value="BAA14958.1"/>
    <property type="molecule type" value="Genomic_DNA"/>
</dbReference>
<dbReference type="PIR" id="C64886">
    <property type="entry name" value="C64886"/>
</dbReference>
<dbReference type="RefSeq" id="NP_415878.1">
    <property type="nucleotide sequence ID" value="NC_000913.3"/>
</dbReference>
<dbReference type="RefSeq" id="WP_000788970.1">
    <property type="nucleotide sequence ID" value="NZ_JACEFS010000049.1"/>
</dbReference>
<dbReference type="SMR" id="P77546"/>
<dbReference type="BioGRID" id="4260159">
    <property type="interactions" value="70"/>
</dbReference>
<dbReference type="BioGRID" id="850291">
    <property type="interactions" value="1"/>
</dbReference>
<dbReference type="DIP" id="DIP-48163N"/>
<dbReference type="FunCoup" id="P77546">
    <property type="interactions" value="180"/>
</dbReference>
<dbReference type="IntAct" id="P77546">
    <property type="interactions" value="3"/>
</dbReference>
<dbReference type="STRING" id="511145.b1360"/>
<dbReference type="PaxDb" id="511145-b1360"/>
<dbReference type="EnsemblBacteria" id="AAC74442">
    <property type="protein sequence ID" value="AAC74442"/>
    <property type="gene ID" value="b1360"/>
</dbReference>
<dbReference type="GeneID" id="945926"/>
<dbReference type="KEGG" id="ecj:JW1355"/>
<dbReference type="KEGG" id="eco:b1360"/>
<dbReference type="KEGG" id="ecoc:C3026_07955"/>
<dbReference type="PATRIC" id="fig|1411691.4.peg.916"/>
<dbReference type="EchoBASE" id="EB3147"/>
<dbReference type="eggNOG" id="COG1484">
    <property type="taxonomic scope" value="Bacteria"/>
</dbReference>
<dbReference type="HOGENOM" id="CLU_062999_3_1_6"/>
<dbReference type="InParanoid" id="P77546"/>
<dbReference type="OMA" id="ITHAFRQ"/>
<dbReference type="OrthoDB" id="5956003at2"/>
<dbReference type="PhylomeDB" id="P77546"/>
<dbReference type="BioCyc" id="EcoCyc:G6684-MONOMER"/>
<dbReference type="PRO" id="PR:P77546"/>
<dbReference type="Proteomes" id="UP000000625">
    <property type="component" value="Chromosome"/>
</dbReference>
<dbReference type="GO" id="GO:0005524">
    <property type="term" value="F:ATP binding"/>
    <property type="evidence" value="ECO:0007669"/>
    <property type="project" value="InterPro"/>
</dbReference>
<dbReference type="GO" id="GO:0006260">
    <property type="term" value="P:DNA replication"/>
    <property type="evidence" value="ECO:0000318"/>
    <property type="project" value="GO_Central"/>
</dbReference>
<dbReference type="CDD" id="cd00009">
    <property type="entry name" value="AAA"/>
    <property type="match status" value="1"/>
</dbReference>
<dbReference type="Gene3D" id="3.40.50.300">
    <property type="entry name" value="P-loop containing nucleotide triphosphate hydrolases"/>
    <property type="match status" value="1"/>
</dbReference>
<dbReference type="InterPro" id="IPR028350">
    <property type="entry name" value="DNAC/IstB-like"/>
</dbReference>
<dbReference type="InterPro" id="IPR002611">
    <property type="entry name" value="IstB_ATP-bd"/>
</dbReference>
<dbReference type="InterPro" id="IPR027417">
    <property type="entry name" value="P-loop_NTPase"/>
</dbReference>
<dbReference type="NCBIfam" id="NF009043">
    <property type="entry name" value="PRK12377.1"/>
    <property type="match status" value="1"/>
</dbReference>
<dbReference type="PANTHER" id="PTHR30050:SF4">
    <property type="entry name" value="ATP-BINDING PROTEIN RV3427C IN INSERTION SEQUENCE-RELATED"/>
    <property type="match status" value="1"/>
</dbReference>
<dbReference type="PANTHER" id="PTHR30050">
    <property type="entry name" value="CHROMOSOMAL REPLICATION INITIATOR PROTEIN DNAA"/>
    <property type="match status" value="1"/>
</dbReference>
<dbReference type="Pfam" id="PF01695">
    <property type="entry name" value="IstB_IS21"/>
    <property type="match status" value="1"/>
</dbReference>
<dbReference type="PIRSF" id="PIRSF003073">
    <property type="entry name" value="DNAC_TnpB_IstB"/>
    <property type="match status" value="1"/>
</dbReference>
<dbReference type="SUPFAM" id="SSF52540">
    <property type="entry name" value="P-loop containing nucleoside triphosphate hydrolases"/>
    <property type="match status" value="1"/>
</dbReference>
<sequence length="248" mass="28128">MKNIATGDVLERIRRLAPSHVTAPFKTVAEWREWQLSEGQKRCEEINRQNRQLRVEKILNRSGIQPLHRKCSFSNYQVQNEGQRYALSQAKSIADELMTGCTNFAFSGKPGTGKNHLAAAIGNRLLKDGQTVIVVTVADVMSALHASYDDGQSGEKFLRELCEVDLLVLDEIGIQRETKNEQVVLHQIVDRRTASMRSVGMLTNLNYEAMKTLLGERIMDRMTMNGGRWVNFNWESWRPNVVQPGIAK</sequence>
<feature type="chain" id="PRO_0000201318" description="Uncharacterized protein YdaV">
    <location>
        <begin position="1"/>
        <end position="248"/>
    </location>
</feature>
<feature type="coiled-coil region" evidence="1">
    <location>
        <begin position="33"/>
        <end position="57"/>
    </location>
</feature>
<name>YDAV_ECOLI</name>
<gene>
    <name type="primary">ydaV</name>
    <name type="ordered locus">b1360</name>
    <name type="ordered locus">JW1355</name>
</gene>
<evidence type="ECO:0000255" key="1"/>
<accession>P77546</accession>
<reference key="1">
    <citation type="journal article" date="1996" name="DNA Res.">
        <title>A 570-kb DNA sequence of the Escherichia coli K-12 genome corresponding to the 28.0-40.1 min region on the linkage map.</title>
        <authorList>
            <person name="Aiba H."/>
            <person name="Baba T."/>
            <person name="Fujita K."/>
            <person name="Hayashi K."/>
            <person name="Inada T."/>
            <person name="Isono K."/>
            <person name="Itoh T."/>
            <person name="Kasai H."/>
            <person name="Kashimoto K."/>
            <person name="Kimura S."/>
            <person name="Kitakawa M."/>
            <person name="Kitagawa M."/>
            <person name="Makino K."/>
            <person name="Miki T."/>
            <person name="Mizobuchi K."/>
            <person name="Mori H."/>
            <person name="Mori T."/>
            <person name="Motomura K."/>
            <person name="Nakade S."/>
            <person name="Nakamura Y."/>
            <person name="Nashimoto H."/>
            <person name="Nishio Y."/>
            <person name="Oshima T."/>
            <person name="Saito N."/>
            <person name="Sampei G."/>
            <person name="Seki Y."/>
            <person name="Sivasundaram S."/>
            <person name="Tagami H."/>
            <person name="Takeda J."/>
            <person name="Takemoto K."/>
            <person name="Takeuchi Y."/>
            <person name="Wada C."/>
            <person name="Yamamoto Y."/>
            <person name="Horiuchi T."/>
        </authorList>
    </citation>
    <scope>NUCLEOTIDE SEQUENCE [LARGE SCALE GENOMIC DNA]</scope>
    <source>
        <strain>K12 / W3110 / ATCC 27325 / DSM 5911</strain>
    </source>
</reference>
<reference key="2">
    <citation type="journal article" date="1997" name="Science">
        <title>The complete genome sequence of Escherichia coli K-12.</title>
        <authorList>
            <person name="Blattner F.R."/>
            <person name="Plunkett G. III"/>
            <person name="Bloch C.A."/>
            <person name="Perna N.T."/>
            <person name="Burland V."/>
            <person name="Riley M."/>
            <person name="Collado-Vides J."/>
            <person name="Glasner J.D."/>
            <person name="Rode C.K."/>
            <person name="Mayhew G.F."/>
            <person name="Gregor J."/>
            <person name="Davis N.W."/>
            <person name="Kirkpatrick H.A."/>
            <person name="Goeden M.A."/>
            <person name="Rose D.J."/>
            <person name="Mau B."/>
            <person name="Shao Y."/>
        </authorList>
    </citation>
    <scope>NUCLEOTIDE SEQUENCE [LARGE SCALE GENOMIC DNA]</scope>
    <source>
        <strain>K12 / MG1655 / ATCC 47076</strain>
    </source>
</reference>
<reference key="3">
    <citation type="journal article" date="2006" name="Mol. Syst. Biol.">
        <title>Highly accurate genome sequences of Escherichia coli K-12 strains MG1655 and W3110.</title>
        <authorList>
            <person name="Hayashi K."/>
            <person name="Morooka N."/>
            <person name="Yamamoto Y."/>
            <person name="Fujita K."/>
            <person name="Isono K."/>
            <person name="Choi S."/>
            <person name="Ohtsubo E."/>
            <person name="Baba T."/>
            <person name="Wanner B.L."/>
            <person name="Mori H."/>
            <person name="Horiuchi T."/>
        </authorList>
    </citation>
    <scope>NUCLEOTIDE SEQUENCE [LARGE SCALE GENOMIC DNA]</scope>
    <source>
        <strain>K12 / W3110 / ATCC 27325 / DSM 5911</strain>
    </source>
</reference>
<protein>
    <recommendedName>
        <fullName>Uncharacterized protein YdaV</fullName>
    </recommendedName>
</protein>
<organism>
    <name type="scientific">Escherichia coli (strain K12)</name>
    <dbReference type="NCBI Taxonomy" id="83333"/>
    <lineage>
        <taxon>Bacteria</taxon>
        <taxon>Pseudomonadati</taxon>
        <taxon>Pseudomonadota</taxon>
        <taxon>Gammaproteobacteria</taxon>
        <taxon>Enterobacterales</taxon>
        <taxon>Enterobacteriaceae</taxon>
        <taxon>Escherichia</taxon>
    </lineage>
</organism>
<proteinExistence type="predicted"/>